<protein>
    <recommendedName>
        <fullName evidence="1">UPF0227 protein Shewana3_2292</fullName>
    </recommendedName>
</protein>
<organism>
    <name type="scientific">Shewanella sp. (strain ANA-3)</name>
    <dbReference type="NCBI Taxonomy" id="94122"/>
    <lineage>
        <taxon>Bacteria</taxon>
        <taxon>Pseudomonadati</taxon>
        <taxon>Pseudomonadota</taxon>
        <taxon>Gammaproteobacteria</taxon>
        <taxon>Alteromonadales</taxon>
        <taxon>Shewanellaceae</taxon>
        <taxon>Shewanella</taxon>
    </lineage>
</organism>
<gene>
    <name type="ordered locus">Shewana3_2292</name>
</gene>
<name>Y2292_SHESA</name>
<evidence type="ECO:0000255" key="1">
    <source>
        <dbReference type="HAMAP-Rule" id="MF_01047"/>
    </source>
</evidence>
<reference key="1">
    <citation type="submission" date="2006-09" db="EMBL/GenBank/DDBJ databases">
        <title>Complete sequence of chromosome 1 of Shewanella sp. ANA-3.</title>
        <authorList>
            <person name="Copeland A."/>
            <person name="Lucas S."/>
            <person name="Lapidus A."/>
            <person name="Barry K."/>
            <person name="Detter J.C."/>
            <person name="Glavina del Rio T."/>
            <person name="Hammon N."/>
            <person name="Israni S."/>
            <person name="Dalin E."/>
            <person name="Tice H."/>
            <person name="Pitluck S."/>
            <person name="Chertkov O."/>
            <person name="Brettin T."/>
            <person name="Bruce D."/>
            <person name="Han C."/>
            <person name="Tapia R."/>
            <person name="Gilna P."/>
            <person name="Schmutz J."/>
            <person name="Larimer F."/>
            <person name="Land M."/>
            <person name="Hauser L."/>
            <person name="Kyrpides N."/>
            <person name="Kim E."/>
            <person name="Newman D."/>
            <person name="Salticov C."/>
            <person name="Konstantinidis K."/>
            <person name="Klappenback J."/>
            <person name="Tiedje J."/>
            <person name="Richardson P."/>
        </authorList>
    </citation>
    <scope>NUCLEOTIDE SEQUENCE [LARGE SCALE GENOMIC DNA]</scope>
    <source>
        <strain>ANA-3</strain>
    </source>
</reference>
<sequence>MIFYLHGFDATSPGNHEKMRQLQFIDPDVRLISYSTLHPKHDMQHLLKEVAKQMQYCADPAPLMVGVGLGAYWAERIGFLNGLKSVLINPNLHPEETMQGKIDRPEEYADIANKCVSEFRLKNTHRAMCILSRVDEVLDSEATAEALKPYYTIEWDETQAHKFPQLAAHLPKIKAFKLS</sequence>
<proteinExistence type="inferred from homology"/>
<comment type="similarity">
    <text evidence="1">Belongs to the UPF0227 family.</text>
</comment>
<accession>A0KXK2</accession>
<feature type="chain" id="PRO_1000064299" description="UPF0227 protein Shewana3_2292">
    <location>
        <begin position="1"/>
        <end position="179"/>
    </location>
</feature>
<dbReference type="EMBL" id="CP000469">
    <property type="protein sequence ID" value="ABK48521.1"/>
    <property type="molecule type" value="Genomic_DNA"/>
</dbReference>
<dbReference type="RefSeq" id="WP_011717227.1">
    <property type="nucleotide sequence ID" value="NC_008577.1"/>
</dbReference>
<dbReference type="SMR" id="A0KXK2"/>
<dbReference type="STRING" id="94122.Shewana3_2292"/>
<dbReference type="ESTHER" id="shesm-y1727">
    <property type="family name" value="abh_upf00227"/>
</dbReference>
<dbReference type="KEGG" id="shn:Shewana3_2292"/>
<dbReference type="eggNOG" id="COG3150">
    <property type="taxonomic scope" value="Bacteria"/>
</dbReference>
<dbReference type="HOGENOM" id="CLU_128769_0_0_6"/>
<dbReference type="OrthoDB" id="6469735at2"/>
<dbReference type="Proteomes" id="UP000002589">
    <property type="component" value="Chromosome"/>
</dbReference>
<dbReference type="Gene3D" id="3.40.50.1820">
    <property type="entry name" value="alpha/beta hydrolase"/>
    <property type="match status" value="1"/>
</dbReference>
<dbReference type="HAMAP" id="MF_01047">
    <property type="entry name" value="UPF0227"/>
    <property type="match status" value="1"/>
</dbReference>
<dbReference type="InterPro" id="IPR029058">
    <property type="entry name" value="AB_hydrolase_fold"/>
</dbReference>
<dbReference type="InterPro" id="IPR022987">
    <property type="entry name" value="UPF0227"/>
</dbReference>
<dbReference type="InterPro" id="IPR008886">
    <property type="entry name" value="UPF0227/Esterase_YqiA"/>
</dbReference>
<dbReference type="NCBIfam" id="NF003431">
    <property type="entry name" value="PRK04940.1"/>
    <property type="match status" value="1"/>
</dbReference>
<dbReference type="PANTHER" id="PTHR35602">
    <property type="entry name" value="ESTERASE YQIA-RELATED"/>
    <property type="match status" value="1"/>
</dbReference>
<dbReference type="PANTHER" id="PTHR35602:SF2">
    <property type="entry name" value="UPF0227 PROTEIN YCFP"/>
    <property type="match status" value="1"/>
</dbReference>
<dbReference type="Pfam" id="PF05728">
    <property type="entry name" value="UPF0227"/>
    <property type="match status" value="1"/>
</dbReference>